<accession>P52194</accession>
<accession>Q80YU3</accession>
<accession>Q9D2K5</accession>
<sequence>MRFQGVGLCLGLLFITVNADFMDDGVEVEDFSENSDESNIKDEPSSGTFKYKTPQPIGEVYFTETFDSGNLAGWVLSKAKKDDMDSEIAIYDGRWEIEELKENQVPGDRGLVLKSKAKHHAIAAVLEKPFIFADKPLIVQYEVNFQDGIDCGGAYIKLLADTGDLILENFYDKTSYTIMFGPDKCGEDYKLHLIFRHKHPKTGVFEEKHAKPPDVDLKEFFTDRKTHLYTLVMNPDDTFEVLIDQKVVNQGTLLDDVVPPINPPREIDDPSDKKPEEWDDRAKIPDPTAVRPEDWDENEPAQIEDSSAVKPDGWLDDEPKFIPNPKAEKPEDWSDDMDGEWEAPHIPNPACQIGCGEWKPPMIDNPKYKGIWRPPMINNPNYQGLWSPQKIPNPDYFEDDHPFLLTSFSALGLELWSMTPDIYFDNFIICSEKEVADQWATDGWELKIMVANANEPGVLRQLVIAAEERPWLWLMYLVMAGLPVALVASFCWPRKVKKKYEDTGPKKTELCKLQSKAALEQEAEEEKAPEKPEDVQEEKKPGEAEVVTVEKEVIGEPEEKSKEDRETLEGQEEVSKLSKSGSEDEMKDADESPGSGDAPLKSLRKRRVRKD</sequence>
<protein>
    <recommendedName>
        <fullName>Calmegin</fullName>
    </recommendedName>
    <alternativeName>
        <fullName>A2/6</fullName>
    </alternativeName>
    <alternativeName>
        <fullName>Calnexin-T</fullName>
    </alternativeName>
    <alternativeName>
        <fullName>MEG 1 antigen</fullName>
    </alternativeName>
</protein>
<name>CLGN_MOUSE</name>
<comment type="function">
    <text evidence="7 8 9 12">Functions during spermatogenesis as a chaperone for a range of client proteins that are important for sperm adhesion onto the egg zona pellucida and for subsequent penetration of the zona pellucida. Required for normal sperm migration from the uterus into the oviduct. Required for normal male fertility. Binds calcium ions.</text>
</comment>
<comment type="subunit">
    <text evidence="1 7">Interacts with PDILT and PPIB (By similarity). Interacts with ADAM2. Interacts with ADAM1A, ADAM1B and ADAM3; these are protein-coding genes in mouse but may be pseudogenes in other organisms.</text>
</comment>
<comment type="subcellular location">
    <subcellularLocation>
        <location evidence="6">Endoplasmic reticulum membrane</location>
        <topology evidence="6">Single-pass type I membrane protein</topology>
    </subcellularLocation>
</comment>
<comment type="tissue specificity">
    <text evidence="7 10 11 12 13">Detected in testis (at protein level). Detected in testis.</text>
</comment>
<comment type="developmental stage">
    <text evidence="6 10">Specifically expressed during male meiotic germ cell development. First detected in early pachytene spermatocytes. Expression is highest in elongating and round spermatids and decreases thereafter. Not detectable in mature spermatids.</text>
</comment>
<comment type="disruption phenotype">
    <text evidence="7 8 12">Male mice show normal mating behavior and produce morphologically normal sperm, but are nearly sterile. Mutant sperm fail to adhere to the egg zona pellucida and are generally unable to penetrate the egg extracellular matrix. In addition, mutant sperm display defects in migration from the uterus into the oviduct.</text>
</comment>
<comment type="similarity">
    <text evidence="14">Belongs to the calreticulin family.</text>
</comment>
<organism>
    <name type="scientific">Mus musculus</name>
    <name type="common">Mouse</name>
    <dbReference type="NCBI Taxonomy" id="10090"/>
    <lineage>
        <taxon>Eukaryota</taxon>
        <taxon>Metazoa</taxon>
        <taxon>Chordata</taxon>
        <taxon>Craniata</taxon>
        <taxon>Vertebrata</taxon>
        <taxon>Euteleostomi</taxon>
        <taxon>Mammalia</taxon>
        <taxon>Eutheria</taxon>
        <taxon>Euarchontoglires</taxon>
        <taxon>Glires</taxon>
        <taxon>Rodentia</taxon>
        <taxon>Myomorpha</taxon>
        <taxon>Muroidea</taxon>
        <taxon>Muridae</taxon>
        <taxon>Murinae</taxon>
        <taxon>Mus</taxon>
        <taxon>Mus</taxon>
    </lineage>
</organism>
<reference key="1">
    <citation type="journal article" date="1994" name="J. Biol. Chem.">
        <title>Molecular cloning of a novel Ca(2+)-binding protein (calmegin) specifically expressed during male meiotic germ cell development.</title>
        <authorList>
            <person name="Watanabe D."/>
            <person name="Yamada K."/>
            <person name="Nishina Y."/>
            <person name="Tajima Y."/>
            <person name="Koshimizu U."/>
            <person name="Nagata A."/>
            <person name="Nishimune Y."/>
        </authorList>
    </citation>
    <scope>NUCLEOTIDE SEQUENCE [MRNA]</scope>
    <scope>CALCIUM-BINDING</scope>
    <scope>DEVELOPMENTAL STAGE</scope>
    <scope>TISSUE SPECIFICITY</scope>
    <source>
        <strain>ICR</strain>
        <tissue>Testis</tissue>
    </source>
</reference>
<reference key="2">
    <citation type="journal article" date="1994" name="J. Biol. Chem.">
        <title>Molecular cloning and sequencing of calnexin-t. An abundant male germ cell-specific calcium-binding protein of the endoplasmic reticulum.</title>
        <authorList>
            <person name="Ohsako S."/>
            <person name="Hayashi Y."/>
            <person name="Bunick D."/>
        </authorList>
    </citation>
    <scope>NUCLEOTIDE SEQUENCE [MRNA]</scope>
    <scope>CALCIUM-BINDING</scope>
    <scope>TISSUE SPECIFICITY</scope>
    <source>
        <strain>CD-1</strain>
        <tissue>Testis</tissue>
    </source>
</reference>
<reference key="3">
    <citation type="journal article" date="1997" name="Gene">
        <title>Cloning and characterization of the human Calmegin gene encoding putative testis-specific chaperone.</title>
        <authorList>
            <person name="Tanaka H."/>
            <person name="Ikawa M."/>
            <person name="Tsuchida J."/>
            <person name="Nozaki M."/>
            <person name="Suzuki M."/>
            <person name="Fujiwara T."/>
            <person name="Okabe M."/>
            <person name="Nishimune Y."/>
        </authorList>
    </citation>
    <scope>NUCLEOTIDE SEQUENCE [MRNA]</scope>
    <scope>TISSUE SPECIFICITY</scope>
    <source>
        <strain>C57BL/6J</strain>
        <tissue>Testis</tissue>
    </source>
</reference>
<reference key="4">
    <citation type="journal article" date="2005" name="Science">
        <title>The transcriptional landscape of the mammalian genome.</title>
        <authorList>
            <person name="Carninci P."/>
            <person name="Kasukawa T."/>
            <person name="Katayama S."/>
            <person name="Gough J."/>
            <person name="Frith M.C."/>
            <person name="Maeda N."/>
            <person name="Oyama R."/>
            <person name="Ravasi T."/>
            <person name="Lenhard B."/>
            <person name="Wells C."/>
            <person name="Kodzius R."/>
            <person name="Shimokawa K."/>
            <person name="Bajic V.B."/>
            <person name="Brenner S.E."/>
            <person name="Batalov S."/>
            <person name="Forrest A.R."/>
            <person name="Zavolan M."/>
            <person name="Davis M.J."/>
            <person name="Wilming L.G."/>
            <person name="Aidinis V."/>
            <person name="Allen J.E."/>
            <person name="Ambesi-Impiombato A."/>
            <person name="Apweiler R."/>
            <person name="Aturaliya R.N."/>
            <person name="Bailey T.L."/>
            <person name="Bansal M."/>
            <person name="Baxter L."/>
            <person name="Beisel K.W."/>
            <person name="Bersano T."/>
            <person name="Bono H."/>
            <person name="Chalk A.M."/>
            <person name="Chiu K.P."/>
            <person name="Choudhary V."/>
            <person name="Christoffels A."/>
            <person name="Clutterbuck D.R."/>
            <person name="Crowe M.L."/>
            <person name="Dalla E."/>
            <person name="Dalrymple B.P."/>
            <person name="de Bono B."/>
            <person name="Della Gatta G."/>
            <person name="di Bernardo D."/>
            <person name="Down T."/>
            <person name="Engstrom P."/>
            <person name="Fagiolini M."/>
            <person name="Faulkner G."/>
            <person name="Fletcher C.F."/>
            <person name="Fukushima T."/>
            <person name="Furuno M."/>
            <person name="Futaki S."/>
            <person name="Gariboldi M."/>
            <person name="Georgii-Hemming P."/>
            <person name="Gingeras T.R."/>
            <person name="Gojobori T."/>
            <person name="Green R.E."/>
            <person name="Gustincich S."/>
            <person name="Harbers M."/>
            <person name="Hayashi Y."/>
            <person name="Hensch T.K."/>
            <person name="Hirokawa N."/>
            <person name="Hill D."/>
            <person name="Huminiecki L."/>
            <person name="Iacono M."/>
            <person name="Ikeo K."/>
            <person name="Iwama A."/>
            <person name="Ishikawa T."/>
            <person name="Jakt M."/>
            <person name="Kanapin A."/>
            <person name="Katoh M."/>
            <person name="Kawasawa Y."/>
            <person name="Kelso J."/>
            <person name="Kitamura H."/>
            <person name="Kitano H."/>
            <person name="Kollias G."/>
            <person name="Krishnan S.P."/>
            <person name="Kruger A."/>
            <person name="Kummerfeld S.K."/>
            <person name="Kurochkin I.V."/>
            <person name="Lareau L.F."/>
            <person name="Lazarevic D."/>
            <person name="Lipovich L."/>
            <person name="Liu J."/>
            <person name="Liuni S."/>
            <person name="McWilliam S."/>
            <person name="Madan Babu M."/>
            <person name="Madera M."/>
            <person name="Marchionni L."/>
            <person name="Matsuda H."/>
            <person name="Matsuzawa S."/>
            <person name="Miki H."/>
            <person name="Mignone F."/>
            <person name="Miyake S."/>
            <person name="Morris K."/>
            <person name="Mottagui-Tabar S."/>
            <person name="Mulder N."/>
            <person name="Nakano N."/>
            <person name="Nakauchi H."/>
            <person name="Ng P."/>
            <person name="Nilsson R."/>
            <person name="Nishiguchi S."/>
            <person name="Nishikawa S."/>
            <person name="Nori F."/>
            <person name="Ohara O."/>
            <person name="Okazaki Y."/>
            <person name="Orlando V."/>
            <person name="Pang K.C."/>
            <person name="Pavan W.J."/>
            <person name="Pavesi G."/>
            <person name="Pesole G."/>
            <person name="Petrovsky N."/>
            <person name="Piazza S."/>
            <person name="Reed J."/>
            <person name="Reid J.F."/>
            <person name="Ring B.Z."/>
            <person name="Ringwald M."/>
            <person name="Rost B."/>
            <person name="Ruan Y."/>
            <person name="Salzberg S.L."/>
            <person name="Sandelin A."/>
            <person name="Schneider C."/>
            <person name="Schoenbach C."/>
            <person name="Sekiguchi K."/>
            <person name="Semple C.A."/>
            <person name="Seno S."/>
            <person name="Sessa L."/>
            <person name="Sheng Y."/>
            <person name="Shibata Y."/>
            <person name="Shimada H."/>
            <person name="Shimada K."/>
            <person name="Silva D."/>
            <person name="Sinclair B."/>
            <person name="Sperling S."/>
            <person name="Stupka E."/>
            <person name="Sugiura K."/>
            <person name="Sultana R."/>
            <person name="Takenaka Y."/>
            <person name="Taki K."/>
            <person name="Tammoja K."/>
            <person name="Tan S.L."/>
            <person name="Tang S."/>
            <person name="Taylor M.S."/>
            <person name="Tegner J."/>
            <person name="Teichmann S.A."/>
            <person name="Ueda H.R."/>
            <person name="van Nimwegen E."/>
            <person name="Verardo R."/>
            <person name="Wei C.L."/>
            <person name="Yagi K."/>
            <person name="Yamanishi H."/>
            <person name="Zabarovsky E."/>
            <person name="Zhu S."/>
            <person name="Zimmer A."/>
            <person name="Hide W."/>
            <person name="Bult C."/>
            <person name="Grimmond S.M."/>
            <person name="Teasdale R.D."/>
            <person name="Liu E.T."/>
            <person name="Brusic V."/>
            <person name="Quackenbush J."/>
            <person name="Wahlestedt C."/>
            <person name="Mattick J.S."/>
            <person name="Hume D.A."/>
            <person name="Kai C."/>
            <person name="Sasaki D."/>
            <person name="Tomaru Y."/>
            <person name="Fukuda S."/>
            <person name="Kanamori-Katayama M."/>
            <person name="Suzuki M."/>
            <person name="Aoki J."/>
            <person name="Arakawa T."/>
            <person name="Iida J."/>
            <person name="Imamura K."/>
            <person name="Itoh M."/>
            <person name="Kato T."/>
            <person name="Kawaji H."/>
            <person name="Kawagashira N."/>
            <person name="Kawashima T."/>
            <person name="Kojima M."/>
            <person name="Kondo S."/>
            <person name="Konno H."/>
            <person name="Nakano K."/>
            <person name="Ninomiya N."/>
            <person name="Nishio T."/>
            <person name="Okada M."/>
            <person name="Plessy C."/>
            <person name="Shibata K."/>
            <person name="Shiraki T."/>
            <person name="Suzuki S."/>
            <person name="Tagami M."/>
            <person name="Waki K."/>
            <person name="Watahiki A."/>
            <person name="Okamura-Oho Y."/>
            <person name="Suzuki H."/>
            <person name="Kawai J."/>
            <person name="Hayashizaki Y."/>
        </authorList>
    </citation>
    <scope>NUCLEOTIDE SEQUENCE [LARGE SCALE MRNA]</scope>
    <source>
        <strain>C57BL/6J</strain>
        <tissue>Testis</tissue>
    </source>
</reference>
<reference key="5">
    <citation type="journal article" date="2004" name="Genome Res.">
        <title>The status, quality, and expansion of the NIH full-length cDNA project: the Mammalian Gene Collection (MGC).</title>
        <authorList>
            <consortium name="The MGC Project Team"/>
        </authorList>
    </citation>
    <scope>NUCLEOTIDE SEQUENCE [LARGE SCALE MRNA]</scope>
    <source>
        <tissue>Testis</tissue>
    </source>
</reference>
<reference key="6">
    <citation type="journal article" date="1997" name="Nature">
        <title>The putative chaperone calmegin is required for sperm fertility.</title>
        <authorList>
            <person name="Ikawa M."/>
            <person name="Wada I."/>
            <person name="Kominami K."/>
            <person name="Watanabe D."/>
            <person name="Toshimori K."/>
            <person name="Nishimune Y."/>
            <person name="Okabe M."/>
        </authorList>
    </citation>
    <scope>DISRUPTION PHENOTYPE</scope>
    <scope>FUNCTION</scope>
    <scope>TISSUE SPECIFICITY</scope>
</reference>
<reference key="7">
    <citation type="journal article" date="1999" name="Arch. Histol. Cytol.">
        <title>Molecular chaperone calmegin localization to the endoplasmic reticulum of meiotic and post-meiotic germ cells in the mouse testis.</title>
        <authorList>
            <person name="Yoshinaga K."/>
            <person name="Tanii I."/>
            <person name="Toshimori K."/>
        </authorList>
    </citation>
    <scope>SUBCELLULAR LOCATION</scope>
    <scope>DEVELOPMENTAL STAGE</scope>
</reference>
<reference key="8">
    <citation type="journal article" date="2001" name="Dev. Biol.">
        <title>Calmegin is required for fertilin alpha/beta heterodimerization and sperm fertility.</title>
        <authorList>
            <person name="Ikawa M."/>
            <person name="Nakanishi T."/>
            <person name="Yamada S."/>
            <person name="Wada I."/>
            <person name="Kominami K."/>
            <person name="Tanaka H."/>
            <person name="Nozaki M."/>
            <person name="Nishimune Y."/>
            <person name="Okabe M."/>
        </authorList>
    </citation>
    <scope>FUNCTION</scope>
    <scope>DISRUPTION PHENOTYPE</scope>
    <scope>INTERACTION WITH ADAM1B AND ADAM2</scope>
    <scope>TISSUE SPECIFICITY</scope>
</reference>
<reference key="9">
    <citation type="journal article" date="2004" name="Biol. Reprod.">
        <title>Selective passage through the uterotubal junction of sperm from a mixed population produced by chimeras of calmegin-knockout and wild-type male mice.</title>
        <authorList>
            <person name="Nakanishi T."/>
            <person name="Isotani A."/>
            <person name="Yamaguchi R."/>
            <person name="Ikawa M."/>
            <person name="Baba T."/>
            <person name="Suarez S.S."/>
            <person name="Okabe M."/>
        </authorList>
    </citation>
    <scope>FUNCTION</scope>
    <scope>DISRUPTION PHENOTYPE</scope>
</reference>
<reference key="10">
    <citation type="journal article" date="2006" name="Biol. Reprod.">
        <title>Aberrant distribution of ADAM3 in sperm from both angiotensin-converting enzyme (Ace)- and calmegin (Clgn)-deficient mice.</title>
        <authorList>
            <person name="Yamaguchi R."/>
            <person name="Yamagata K."/>
            <person name="Ikawa M."/>
            <person name="Moss S.B."/>
            <person name="Okabe M."/>
        </authorList>
    </citation>
    <scope>FUNCTION</scope>
</reference>
<reference key="11">
    <citation type="journal article" date="2010" name="Cell">
        <title>A tissue-specific atlas of mouse protein phosphorylation and expression.</title>
        <authorList>
            <person name="Huttlin E.L."/>
            <person name="Jedrychowski M.P."/>
            <person name="Elias J.E."/>
            <person name="Goswami T."/>
            <person name="Rad R."/>
            <person name="Beausoleil S.A."/>
            <person name="Villen J."/>
            <person name="Haas W."/>
            <person name="Sowa M.E."/>
            <person name="Gygi S.P."/>
        </authorList>
    </citation>
    <scope>PHOSPHORYLATION [LARGE SCALE ANALYSIS] AT SER-578; SER-580; SER-582; SER-592 AND SER-595</scope>
    <scope>IDENTIFICATION BY MASS SPECTROMETRY [LARGE SCALE ANALYSIS]</scope>
    <source>
        <tissue>Brain</tissue>
        <tissue>Testis</tissue>
    </source>
</reference>
<gene>
    <name type="primary">Clgn</name>
    <name type="synonym">Meg1</name>
</gene>
<evidence type="ECO:0000250" key="1"/>
<evidence type="ECO:0000250" key="2">
    <source>
        <dbReference type="UniProtKB" id="O14967"/>
    </source>
</evidence>
<evidence type="ECO:0000250" key="3">
    <source>
        <dbReference type="UniProtKB" id="P27824"/>
    </source>
</evidence>
<evidence type="ECO:0000255" key="4"/>
<evidence type="ECO:0000256" key="5">
    <source>
        <dbReference type="SAM" id="MobiDB-lite"/>
    </source>
</evidence>
<evidence type="ECO:0000269" key="6">
    <source>
    </source>
</evidence>
<evidence type="ECO:0000269" key="7">
    <source>
    </source>
</evidence>
<evidence type="ECO:0000269" key="8">
    <source>
    </source>
</evidence>
<evidence type="ECO:0000269" key="9">
    <source>
    </source>
</evidence>
<evidence type="ECO:0000269" key="10">
    <source>
    </source>
</evidence>
<evidence type="ECO:0000269" key="11">
    <source>
    </source>
</evidence>
<evidence type="ECO:0000269" key="12">
    <source>
    </source>
</evidence>
<evidence type="ECO:0000269" key="13">
    <source>
    </source>
</evidence>
<evidence type="ECO:0000305" key="14"/>
<evidence type="ECO:0007744" key="15">
    <source>
    </source>
</evidence>
<proteinExistence type="evidence at protein level"/>
<feature type="signal peptide" evidence="4">
    <location>
        <begin position="1"/>
        <end position="19"/>
    </location>
</feature>
<feature type="chain" id="PRO_0000004211" description="Calmegin">
    <location>
        <begin position="20"/>
        <end position="611"/>
    </location>
</feature>
<feature type="topological domain" description="Lumenal" evidence="4">
    <location>
        <begin position="20"/>
        <end position="471"/>
    </location>
</feature>
<feature type="transmembrane region" description="Helical" evidence="4">
    <location>
        <begin position="472"/>
        <end position="492"/>
    </location>
</feature>
<feature type="topological domain" description="Cytoplasmic" evidence="4">
    <location>
        <begin position="493"/>
        <end position="611"/>
    </location>
</feature>
<feature type="repeat" description="1-1">
    <location>
        <begin position="267"/>
        <end position="280"/>
    </location>
</feature>
<feature type="repeat" description="1-2">
    <location>
        <begin position="284"/>
        <end position="297"/>
    </location>
</feature>
<feature type="repeat" description="1-3">
    <location>
        <begin position="303"/>
        <end position="316"/>
    </location>
</feature>
<feature type="repeat" description="1-4">
    <location>
        <begin position="322"/>
        <end position="335"/>
    </location>
</feature>
<feature type="repeat" description="2-1">
    <location>
        <begin position="339"/>
        <end position="352"/>
    </location>
</feature>
<feature type="repeat" description="2-2">
    <location>
        <begin position="356"/>
        <end position="369"/>
    </location>
</feature>
<feature type="repeat" description="2-3">
    <location>
        <begin position="370"/>
        <end position="383"/>
    </location>
</feature>
<feature type="repeat" description="2-4">
    <location>
        <begin position="384"/>
        <end position="397"/>
    </location>
</feature>
<feature type="region of interest" description="Disordered" evidence="5">
    <location>
        <begin position="254"/>
        <end position="335"/>
    </location>
</feature>
<feature type="region of interest" description="Interaction with PPIB" evidence="1">
    <location>
        <begin position="317"/>
        <end position="350"/>
    </location>
</feature>
<feature type="region of interest" description="Disordered" evidence="5">
    <location>
        <begin position="517"/>
        <end position="611"/>
    </location>
</feature>
<feature type="compositionally biased region" description="Basic and acidic residues" evidence="5">
    <location>
        <begin position="265"/>
        <end position="284"/>
    </location>
</feature>
<feature type="compositionally biased region" description="Basic and acidic residues" evidence="5">
    <location>
        <begin position="526"/>
        <end position="584"/>
    </location>
</feature>
<feature type="compositionally biased region" description="Basic residues" evidence="5">
    <location>
        <begin position="602"/>
        <end position="611"/>
    </location>
</feature>
<feature type="modified residue" description="N6-acetyllysine" evidence="3">
    <location>
        <position position="128"/>
    </location>
</feature>
<feature type="modified residue" description="Phosphoserine" evidence="2">
    <location>
        <position position="561"/>
    </location>
</feature>
<feature type="modified residue" description="Phosphoserine" evidence="15">
    <location>
        <position position="578"/>
    </location>
</feature>
<feature type="modified residue" description="Phosphoserine" evidence="15">
    <location>
        <position position="580"/>
    </location>
</feature>
<feature type="modified residue" description="Phosphoserine" evidence="15">
    <location>
        <position position="582"/>
    </location>
</feature>
<feature type="modified residue" description="Phosphoserine" evidence="15">
    <location>
        <position position="592"/>
    </location>
</feature>
<feature type="modified residue" description="Phosphoserine" evidence="15">
    <location>
        <position position="595"/>
    </location>
</feature>
<feature type="modified residue" description="Phosphoserine" evidence="3">
    <location>
        <position position="602"/>
    </location>
</feature>
<feature type="disulfide bond" evidence="1">
    <location>
        <begin position="151"/>
        <end position="185"/>
    </location>
</feature>
<feature type="disulfide bond" evidence="1">
    <location>
        <begin position="351"/>
        <end position="355"/>
    </location>
</feature>
<feature type="sequence conflict" description="In Ref. 2; AAA20599." evidence="14" ref="2">
    <original>LSKA</original>
    <variation>YQS</variation>
    <location>
        <begin position="76"/>
        <end position="79"/>
    </location>
</feature>
<feature type="sequence conflict" description="In Ref. 2; AAA20599." evidence="14" ref="2">
    <original>E</original>
    <variation>Q</variation>
    <location>
        <position position="87"/>
    </location>
</feature>
<feature type="sequence conflict" description="In Ref. 2; AAA20599." evidence="14" ref="2">
    <original>E</original>
    <variation>D</variation>
    <location>
        <position position="127"/>
    </location>
</feature>
<feature type="sequence conflict" description="In Ref. 2; AAA20599." evidence="14" ref="2">
    <original>ADK</original>
    <variation>GAIN</variation>
    <location>
        <begin position="133"/>
        <end position="135"/>
    </location>
</feature>
<feature type="sequence conflict" description="In Ref. 2; AAA20599." evidence="14" ref="2">
    <original>K</original>
    <variation>Q</variation>
    <location>
        <position position="201"/>
    </location>
</feature>
<feature type="sequence conflict" description="In Ref. 2; AAA20599." evidence="14" ref="2">
    <original>A</original>
    <variation>P</variation>
    <location>
        <position position="210"/>
    </location>
</feature>
<feature type="sequence conflict" description="In Ref. 1; BAA03180, 2; AAA20599 and 3; BAA22591." evidence="14" ref="1 2 3">
    <original>R</original>
    <variation>K</variation>
    <location>
        <position position="291"/>
    </location>
</feature>
<feature type="sequence conflict" description="In Ref. 2; AAA20599." evidence="14" ref="2">
    <original>A</original>
    <variation>D</variation>
    <location>
        <position position="350"/>
    </location>
</feature>
<feature type="sequence conflict" description="In Ref. 2; AAA20599." evidence="14" ref="2">
    <original>E</original>
    <variation>D</variation>
    <location>
        <position position="432"/>
    </location>
</feature>
<feature type="sequence conflict" description="In Ref. 2; AAA20599." evidence="14" ref="2">
    <original>A</original>
    <variation>P</variation>
    <location>
        <position position="436"/>
    </location>
</feature>
<feature type="sequence conflict" description="In Ref. 2; AAA20599." evidence="14" ref="2">
    <original>A</original>
    <variation>P</variation>
    <location>
        <position position="440"/>
    </location>
</feature>
<feature type="sequence conflict" description="In Ref. 2; AAA20599." evidence="14" ref="2">
    <original>E</original>
    <variation>D</variation>
    <location>
        <position position="445"/>
    </location>
</feature>
<feature type="sequence conflict" description="In Ref. 2; AAA20599." evidence="14" ref="2">
    <original>A</original>
    <variation>T</variation>
    <location>
        <position position="451"/>
    </location>
</feature>
<feature type="sequence conflict" description="In Ref. 2; AAA20599." evidence="14" ref="2">
    <original>E</original>
    <variation>D</variation>
    <location>
        <position position="522"/>
    </location>
</feature>
<feature type="sequence conflict" description="In Ref. 2; AAA20599." evidence="14" ref="2">
    <original>V</original>
    <variation>L</variation>
    <location>
        <position position="549"/>
    </location>
</feature>
<feature type="sequence conflict" description="In Ref. 4; BAB31782." evidence="14" ref="4">
    <original>LS</original>
    <variation>AE</variation>
    <location>
        <begin position="577"/>
        <end position="578"/>
    </location>
</feature>
<dbReference type="EMBL" id="D14117">
    <property type="protein sequence ID" value="BAA03180.1"/>
    <property type="molecule type" value="mRNA"/>
</dbReference>
<dbReference type="EMBL" id="U08373">
    <property type="protein sequence ID" value="AAA20599.1"/>
    <property type="molecule type" value="mRNA"/>
</dbReference>
<dbReference type="EMBL" id="D86323">
    <property type="protein sequence ID" value="BAA22591.1"/>
    <property type="molecule type" value="mRNA"/>
</dbReference>
<dbReference type="EMBL" id="AK019534">
    <property type="protein sequence ID" value="BAB31782.1"/>
    <property type="status" value="ALT_SEQ"/>
    <property type="molecule type" value="mRNA"/>
</dbReference>
<dbReference type="EMBL" id="BC050767">
    <property type="protein sequence ID" value="AAH50767.1"/>
    <property type="molecule type" value="mRNA"/>
</dbReference>
<dbReference type="CCDS" id="CCDS22452.1"/>
<dbReference type="PIR" id="A53418">
    <property type="entry name" value="A53418"/>
</dbReference>
<dbReference type="PIR" id="A54086">
    <property type="entry name" value="A54086"/>
</dbReference>
<dbReference type="RefSeq" id="NP_001316556.1">
    <property type="nucleotide sequence ID" value="NM_001329627.1"/>
</dbReference>
<dbReference type="RefSeq" id="NP_034034.2">
    <property type="nucleotide sequence ID" value="NM_009904.4"/>
</dbReference>
<dbReference type="RefSeq" id="XP_011246600.1">
    <property type="nucleotide sequence ID" value="XM_011248298.4"/>
</dbReference>
<dbReference type="SMR" id="P52194"/>
<dbReference type="BioGRID" id="198750">
    <property type="interactions" value="1"/>
</dbReference>
<dbReference type="DIP" id="DIP-47581N"/>
<dbReference type="FunCoup" id="P52194">
    <property type="interactions" value="667"/>
</dbReference>
<dbReference type="IntAct" id="P52194">
    <property type="interactions" value="4"/>
</dbReference>
<dbReference type="MINT" id="P52194"/>
<dbReference type="STRING" id="10090.ENSMUSP00000002259"/>
<dbReference type="iPTMnet" id="P52194"/>
<dbReference type="PhosphoSitePlus" id="P52194"/>
<dbReference type="SwissPalm" id="P52194"/>
<dbReference type="PaxDb" id="10090-ENSMUSP00000105457"/>
<dbReference type="PeptideAtlas" id="P52194"/>
<dbReference type="ProteomicsDB" id="283382"/>
<dbReference type="Antibodypedia" id="16228">
    <property type="antibodies" value="209 antibodies from 31 providers"/>
</dbReference>
<dbReference type="DNASU" id="12745"/>
<dbReference type="Ensembl" id="ENSMUST00000002259.13">
    <property type="protein sequence ID" value="ENSMUSP00000002259.7"/>
    <property type="gene ID" value="ENSMUSG00000002190.14"/>
</dbReference>
<dbReference type="Ensembl" id="ENSMUST00000109831.3">
    <property type="protein sequence ID" value="ENSMUSP00000105457.3"/>
    <property type="gene ID" value="ENSMUSG00000002190.14"/>
</dbReference>
<dbReference type="GeneID" id="12745"/>
<dbReference type="KEGG" id="mmu:12745"/>
<dbReference type="UCSC" id="uc009mkd.1">
    <property type="organism name" value="mouse"/>
</dbReference>
<dbReference type="AGR" id="MGI:107472"/>
<dbReference type="CTD" id="1047"/>
<dbReference type="MGI" id="MGI:107472">
    <property type="gene designation" value="Clgn"/>
</dbReference>
<dbReference type="VEuPathDB" id="HostDB:ENSMUSG00000002190"/>
<dbReference type="eggNOG" id="KOG0675">
    <property type="taxonomic scope" value="Eukaryota"/>
</dbReference>
<dbReference type="GeneTree" id="ENSGT00950000182915"/>
<dbReference type="HOGENOM" id="CLU_018224_2_0_1"/>
<dbReference type="InParanoid" id="P52194"/>
<dbReference type="OMA" id="KHAKPPN"/>
<dbReference type="OrthoDB" id="1938156at2759"/>
<dbReference type="PhylomeDB" id="P52194"/>
<dbReference type="TreeFam" id="TF300618"/>
<dbReference type="BioGRID-ORCS" id="12745">
    <property type="hits" value="2 hits in 77 CRISPR screens"/>
</dbReference>
<dbReference type="ChiTaRS" id="Clgn">
    <property type="organism name" value="mouse"/>
</dbReference>
<dbReference type="PRO" id="PR:P52194"/>
<dbReference type="Proteomes" id="UP000000589">
    <property type="component" value="Chromosome 8"/>
</dbReference>
<dbReference type="RNAct" id="P52194">
    <property type="molecule type" value="protein"/>
</dbReference>
<dbReference type="Bgee" id="ENSMUSG00000002190">
    <property type="expression patterns" value="Expressed in spermatocyte and 71 other cell types or tissues"/>
</dbReference>
<dbReference type="GO" id="GO:0005783">
    <property type="term" value="C:endoplasmic reticulum"/>
    <property type="evidence" value="ECO:0000314"/>
    <property type="project" value="MGI"/>
</dbReference>
<dbReference type="GO" id="GO:0005789">
    <property type="term" value="C:endoplasmic reticulum membrane"/>
    <property type="evidence" value="ECO:0007669"/>
    <property type="project" value="UniProtKB-SubCell"/>
</dbReference>
<dbReference type="GO" id="GO:0005635">
    <property type="term" value="C:nuclear envelope"/>
    <property type="evidence" value="ECO:0000314"/>
    <property type="project" value="MGI"/>
</dbReference>
<dbReference type="GO" id="GO:0005509">
    <property type="term" value="F:calcium ion binding"/>
    <property type="evidence" value="ECO:0000314"/>
    <property type="project" value="MGI"/>
</dbReference>
<dbReference type="GO" id="GO:0044183">
    <property type="term" value="F:protein folding chaperone"/>
    <property type="evidence" value="ECO:0000315"/>
    <property type="project" value="MGI"/>
</dbReference>
<dbReference type="GO" id="GO:0051082">
    <property type="term" value="F:unfolded protein binding"/>
    <property type="evidence" value="ECO:0007669"/>
    <property type="project" value="InterPro"/>
</dbReference>
<dbReference type="GO" id="GO:0007339">
    <property type="term" value="P:binding of sperm to zona pellucida"/>
    <property type="evidence" value="ECO:0000315"/>
    <property type="project" value="MGI"/>
</dbReference>
<dbReference type="GO" id="GO:0030154">
    <property type="term" value="P:cell differentiation"/>
    <property type="evidence" value="ECO:0007669"/>
    <property type="project" value="UniProtKB-KW"/>
</dbReference>
<dbReference type="GO" id="GO:0051321">
    <property type="term" value="P:meiotic cell cycle"/>
    <property type="evidence" value="ECO:0007669"/>
    <property type="project" value="UniProtKB-KW"/>
</dbReference>
<dbReference type="GO" id="GO:0065003">
    <property type="term" value="P:protein-containing complex assembly"/>
    <property type="evidence" value="ECO:0000315"/>
    <property type="project" value="MGI"/>
</dbReference>
<dbReference type="GO" id="GO:0007338">
    <property type="term" value="P:single fertilization"/>
    <property type="evidence" value="ECO:0000316"/>
    <property type="project" value="MGI"/>
</dbReference>
<dbReference type="GO" id="GO:0007283">
    <property type="term" value="P:spermatogenesis"/>
    <property type="evidence" value="ECO:0007669"/>
    <property type="project" value="UniProtKB-KW"/>
</dbReference>
<dbReference type="FunFam" id="2.10.250.10:FF:000001">
    <property type="entry name" value="Calnexin homolog"/>
    <property type="match status" value="1"/>
</dbReference>
<dbReference type="FunFam" id="2.60.120.200:FF:000430">
    <property type="entry name" value="Si:ch211-274f20.2"/>
    <property type="match status" value="1"/>
</dbReference>
<dbReference type="Gene3D" id="2.60.120.200">
    <property type="match status" value="1"/>
</dbReference>
<dbReference type="Gene3D" id="2.10.250.10">
    <property type="entry name" value="Calreticulin/calnexin, P domain"/>
    <property type="match status" value="1"/>
</dbReference>
<dbReference type="InterPro" id="IPR001580">
    <property type="entry name" value="Calret/calnex"/>
</dbReference>
<dbReference type="InterPro" id="IPR018124">
    <property type="entry name" value="Calret/calnex_CS"/>
</dbReference>
<dbReference type="InterPro" id="IPR009033">
    <property type="entry name" value="Calreticulin/calnexin_P_dom_sf"/>
</dbReference>
<dbReference type="InterPro" id="IPR013320">
    <property type="entry name" value="ConA-like_dom_sf"/>
</dbReference>
<dbReference type="PANTHER" id="PTHR11073:SF7">
    <property type="entry name" value="CALMEGIN"/>
    <property type="match status" value="1"/>
</dbReference>
<dbReference type="PANTHER" id="PTHR11073">
    <property type="entry name" value="CALRETICULIN AND CALNEXIN"/>
    <property type="match status" value="1"/>
</dbReference>
<dbReference type="Pfam" id="PF00262">
    <property type="entry name" value="Calreticulin"/>
    <property type="match status" value="1"/>
</dbReference>
<dbReference type="PRINTS" id="PR00626">
    <property type="entry name" value="CALRETICULIN"/>
</dbReference>
<dbReference type="SUPFAM" id="SSF49899">
    <property type="entry name" value="Concanavalin A-like lectins/glucanases"/>
    <property type="match status" value="1"/>
</dbReference>
<dbReference type="SUPFAM" id="SSF63887">
    <property type="entry name" value="P-domain of calnexin/calreticulin"/>
    <property type="match status" value="1"/>
</dbReference>
<dbReference type="PROSITE" id="PS00803">
    <property type="entry name" value="CALRETICULIN_1"/>
    <property type="match status" value="1"/>
</dbReference>
<dbReference type="PROSITE" id="PS00804">
    <property type="entry name" value="CALRETICULIN_2"/>
    <property type="match status" value="1"/>
</dbReference>
<keyword id="KW-0007">Acetylation</keyword>
<keyword id="KW-0106">Calcium</keyword>
<keyword id="KW-0143">Chaperone</keyword>
<keyword id="KW-0217">Developmental protein</keyword>
<keyword id="KW-0221">Differentiation</keyword>
<keyword id="KW-1015">Disulfide bond</keyword>
<keyword id="KW-0256">Endoplasmic reticulum</keyword>
<keyword id="KW-0469">Meiosis</keyword>
<keyword id="KW-0472">Membrane</keyword>
<keyword id="KW-0597">Phosphoprotein</keyword>
<keyword id="KW-1185">Reference proteome</keyword>
<keyword id="KW-0677">Repeat</keyword>
<keyword id="KW-0732">Signal</keyword>
<keyword id="KW-0744">Spermatogenesis</keyword>
<keyword id="KW-0812">Transmembrane</keyword>
<keyword id="KW-1133">Transmembrane helix</keyword>